<dbReference type="EMBL" id="AB126245">
    <property type="protein sequence ID" value="BAD95563.1"/>
    <property type="molecule type" value="Genomic_DNA"/>
</dbReference>
<dbReference type="SMR" id="Q564P2"/>
<dbReference type="GO" id="GO:0005743">
    <property type="term" value="C:mitochondrial inner membrane"/>
    <property type="evidence" value="ECO:0007669"/>
    <property type="project" value="UniProtKB-SubCell"/>
</dbReference>
<dbReference type="GO" id="GO:0045275">
    <property type="term" value="C:respiratory chain complex III"/>
    <property type="evidence" value="ECO:0007669"/>
    <property type="project" value="InterPro"/>
</dbReference>
<dbReference type="GO" id="GO:0046872">
    <property type="term" value="F:metal ion binding"/>
    <property type="evidence" value="ECO:0007669"/>
    <property type="project" value="UniProtKB-KW"/>
</dbReference>
<dbReference type="GO" id="GO:0008121">
    <property type="term" value="F:ubiquinol-cytochrome-c reductase activity"/>
    <property type="evidence" value="ECO:0007669"/>
    <property type="project" value="InterPro"/>
</dbReference>
<dbReference type="GO" id="GO:0006122">
    <property type="term" value="P:mitochondrial electron transport, ubiquinol to cytochrome c"/>
    <property type="evidence" value="ECO:0007669"/>
    <property type="project" value="TreeGrafter"/>
</dbReference>
<dbReference type="CDD" id="cd00290">
    <property type="entry name" value="cytochrome_b_C"/>
    <property type="match status" value="1"/>
</dbReference>
<dbReference type="CDD" id="cd00284">
    <property type="entry name" value="Cytochrome_b_N"/>
    <property type="match status" value="1"/>
</dbReference>
<dbReference type="FunFam" id="1.20.810.10:FF:000002">
    <property type="entry name" value="Cytochrome b"/>
    <property type="match status" value="1"/>
</dbReference>
<dbReference type="Gene3D" id="1.20.810.10">
    <property type="entry name" value="Cytochrome Bc1 Complex, Chain C"/>
    <property type="match status" value="1"/>
</dbReference>
<dbReference type="InterPro" id="IPR005798">
    <property type="entry name" value="Cyt_b/b6_C"/>
</dbReference>
<dbReference type="InterPro" id="IPR036150">
    <property type="entry name" value="Cyt_b/b6_C_sf"/>
</dbReference>
<dbReference type="InterPro" id="IPR005797">
    <property type="entry name" value="Cyt_b/b6_N"/>
</dbReference>
<dbReference type="InterPro" id="IPR027387">
    <property type="entry name" value="Cytb/b6-like_sf"/>
</dbReference>
<dbReference type="InterPro" id="IPR030689">
    <property type="entry name" value="Cytochrome_b"/>
</dbReference>
<dbReference type="InterPro" id="IPR048260">
    <property type="entry name" value="Cytochrome_b_C_euk/bac"/>
</dbReference>
<dbReference type="InterPro" id="IPR048259">
    <property type="entry name" value="Cytochrome_b_N_euk/bac"/>
</dbReference>
<dbReference type="InterPro" id="IPR016174">
    <property type="entry name" value="Di-haem_cyt_TM"/>
</dbReference>
<dbReference type="PANTHER" id="PTHR19271">
    <property type="entry name" value="CYTOCHROME B"/>
    <property type="match status" value="1"/>
</dbReference>
<dbReference type="PANTHER" id="PTHR19271:SF16">
    <property type="entry name" value="CYTOCHROME B"/>
    <property type="match status" value="1"/>
</dbReference>
<dbReference type="Pfam" id="PF00032">
    <property type="entry name" value="Cytochrom_B_C"/>
    <property type="match status" value="1"/>
</dbReference>
<dbReference type="Pfam" id="PF00033">
    <property type="entry name" value="Cytochrome_B"/>
    <property type="match status" value="1"/>
</dbReference>
<dbReference type="PIRSF" id="PIRSF038885">
    <property type="entry name" value="COB"/>
    <property type="match status" value="1"/>
</dbReference>
<dbReference type="SUPFAM" id="SSF81648">
    <property type="entry name" value="a domain/subunit of cytochrome bc1 complex (Ubiquinol-cytochrome c reductase)"/>
    <property type="match status" value="1"/>
</dbReference>
<dbReference type="SUPFAM" id="SSF81342">
    <property type="entry name" value="Transmembrane di-heme cytochromes"/>
    <property type="match status" value="1"/>
</dbReference>
<dbReference type="PROSITE" id="PS51003">
    <property type="entry name" value="CYTB_CTER"/>
    <property type="match status" value="1"/>
</dbReference>
<dbReference type="PROSITE" id="PS51002">
    <property type="entry name" value="CYTB_NTER"/>
    <property type="match status" value="1"/>
</dbReference>
<organism>
    <name type="scientific">Belomys pearsonii</name>
    <name type="common">Hairy-footed flying squirrel</name>
    <dbReference type="NCBI Taxonomy" id="100949"/>
    <lineage>
        <taxon>Eukaryota</taxon>
        <taxon>Metazoa</taxon>
        <taxon>Chordata</taxon>
        <taxon>Craniata</taxon>
        <taxon>Vertebrata</taxon>
        <taxon>Euteleostomi</taxon>
        <taxon>Mammalia</taxon>
        <taxon>Eutheria</taxon>
        <taxon>Euarchontoglires</taxon>
        <taxon>Glires</taxon>
        <taxon>Rodentia</taxon>
        <taxon>Sciuromorpha</taxon>
        <taxon>Sciuridae</taxon>
        <taxon>Sciurinae</taxon>
        <taxon>Pteromyini</taxon>
        <taxon>Belomys</taxon>
    </lineage>
</organism>
<sequence length="379" mass="42907">MTNIRKTHPLLKIVNHSFIDLPTPSNISAWWNFGSLLGFCLIIQILTGLFLAMHYTSDTMTAFSSVTHICRDVNYGWLIRYMHANGASMFFICLFLHVGRGLYYGSYTYFETWNIGIILLFTVMATAFMGYVLPWGQMSFWGATVITNLLSAIPYIGTDLVEWIWGGFSVDKATLTRFFAFHFILPFIVAALAMVHLLFLHETGSNNPSGLISESDKVPFHPYFTIKDILGALIFGLMFTTLILFAPDLLGDPDNYTPANPLNTPPHIKPEWYFLFAYAILRSIPNKLGGVLALVFSILILVLFPILHLSKQRSMMFRPLSQCVFWILVADLLTLTWIGGQPVEHPFITIGQLASIIYFTIILIILPTTSLLENKLLKW</sequence>
<geneLocation type="mitochondrion"/>
<gene>
    <name type="primary">MT-CYB</name>
    <name type="synonym">COB</name>
    <name type="synonym">CYTB</name>
    <name type="synonym">MTCYB</name>
</gene>
<evidence type="ECO:0000250" key="1"/>
<evidence type="ECO:0000250" key="2">
    <source>
        <dbReference type="UniProtKB" id="P00157"/>
    </source>
</evidence>
<evidence type="ECO:0000255" key="3">
    <source>
        <dbReference type="PROSITE-ProRule" id="PRU00967"/>
    </source>
</evidence>
<evidence type="ECO:0000255" key="4">
    <source>
        <dbReference type="PROSITE-ProRule" id="PRU00968"/>
    </source>
</evidence>
<comment type="function">
    <text evidence="2">Component of the ubiquinol-cytochrome c reductase complex (complex III or cytochrome b-c1 complex) that is part of the mitochondrial respiratory chain. The b-c1 complex mediates electron transfer from ubiquinol to cytochrome c. Contributes to the generation of a proton gradient across the mitochondrial membrane that is then used for ATP synthesis.</text>
</comment>
<comment type="cofactor">
    <cofactor evidence="2">
        <name>heme b</name>
        <dbReference type="ChEBI" id="CHEBI:60344"/>
    </cofactor>
    <text evidence="2">Binds 2 heme b groups non-covalently.</text>
</comment>
<comment type="subunit">
    <text evidence="2">The cytochrome bc1 complex contains 11 subunits: 3 respiratory subunits (MT-CYB, CYC1 and UQCRFS1), 2 core proteins (UQCRC1 and UQCRC2) and 6 low-molecular weight proteins (UQCRH/QCR6, UQCRB/QCR7, UQCRQ/QCR8, UQCR10/QCR9, UQCR11/QCR10 and a cleavage product of UQCRFS1). This cytochrome bc1 complex then forms a dimer.</text>
</comment>
<comment type="subcellular location">
    <subcellularLocation>
        <location evidence="2">Mitochondrion inner membrane</location>
        <topology evidence="2">Multi-pass membrane protein</topology>
    </subcellularLocation>
</comment>
<comment type="miscellaneous">
    <text evidence="1">Heme 1 (or BL or b562) is low-potential and absorbs at about 562 nm, and heme 2 (or BH or b566) is high-potential and absorbs at about 566 nm.</text>
</comment>
<comment type="similarity">
    <text evidence="3 4">Belongs to the cytochrome b family.</text>
</comment>
<comment type="caution">
    <text evidence="2">The full-length protein contains only eight transmembrane helices, not nine as predicted by bioinformatics tools.</text>
</comment>
<reference key="1">
    <citation type="journal article" date="2004" name="Can. J. Zool.">
        <title>Phylogenetic position of the Kashmir flying squirrel, Hylopetes fimbriatus (=Eoglaucomys fimbriatus), in the subfamily Pteromyinae.</title>
        <authorList>
            <person name="Oshida T."/>
            <person name="Shafique C.M."/>
            <person name="Barkati S."/>
            <person name="Yasuda M."/>
            <person name="Hussein N.A."/>
            <person name="Endo H."/>
            <person name="Yanagawa H."/>
            <person name="Masuda R."/>
        </authorList>
    </citation>
    <scope>NUCLEOTIDE SEQUENCE [GENOMIC DNA]</scope>
    <source>
        <strain>Isolate TW06</strain>
    </source>
</reference>
<proteinExistence type="inferred from homology"/>
<feature type="chain" id="PRO_0000257872" description="Cytochrome b">
    <location>
        <begin position="1"/>
        <end position="379"/>
    </location>
</feature>
<feature type="transmembrane region" description="Helical" evidence="2">
    <location>
        <begin position="33"/>
        <end position="53"/>
    </location>
</feature>
<feature type="transmembrane region" description="Helical" evidence="2">
    <location>
        <begin position="77"/>
        <end position="98"/>
    </location>
</feature>
<feature type="transmembrane region" description="Helical" evidence="2">
    <location>
        <begin position="113"/>
        <end position="133"/>
    </location>
</feature>
<feature type="transmembrane region" description="Helical" evidence="2">
    <location>
        <begin position="178"/>
        <end position="198"/>
    </location>
</feature>
<feature type="transmembrane region" description="Helical" evidence="2">
    <location>
        <begin position="226"/>
        <end position="246"/>
    </location>
</feature>
<feature type="transmembrane region" description="Helical" evidence="2">
    <location>
        <begin position="288"/>
        <end position="308"/>
    </location>
</feature>
<feature type="transmembrane region" description="Helical" evidence="2">
    <location>
        <begin position="320"/>
        <end position="340"/>
    </location>
</feature>
<feature type="transmembrane region" description="Helical" evidence="2">
    <location>
        <begin position="347"/>
        <end position="367"/>
    </location>
</feature>
<feature type="binding site" description="axial binding residue" evidence="2">
    <location>
        <position position="83"/>
    </location>
    <ligand>
        <name>heme b</name>
        <dbReference type="ChEBI" id="CHEBI:60344"/>
        <label>b562</label>
    </ligand>
    <ligandPart>
        <name>Fe</name>
        <dbReference type="ChEBI" id="CHEBI:18248"/>
    </ligandPart>
</feature>
<feature type="binding site" description="axial binding residue" evidence="2">
    <location>
        <position position="97"/>
    </location>
    <ligand>
        <name>heme b</name>
        <dbReference type="ChEBI" id="CHEBI:60344"/>
        <label>b566</label>
    </ligand>
    <ligandPart>
        <name>Fe</name>
        <dbReference type="ChEBI" id="CHEBI:18248"/>
    </ligandPart>
</feature>
<feature type="binding site" description="axial binding residue" evidence="2">
    <location>
        <position position="182"/>
    </location>
    <ligand>
        <name>heme b</name>
        <dbReference type="ChEBI" id="CHEBI:60344"/>
        <label>b562</label>
    </ligand>
    <ligandPart>
        <name>Fe</name>
        <dbReference type="ChEBI" id="CHEBI:18248"/>
    </ligandPart>
</feature>
<feature type="binding site" description="axial binding residue" evidence="2">
    <location>
        <position position="196"/>
    </location>
    <ligand>
        <name>heme b</name>
        <dbReference type="ChEBI" id="CHEBI:60344"/>
        <label>b566</label>
    </ligand>
    <ligandPart>
        <name>Fe</name>
        <dbReference type="ChEBI" id="CHEBI:18248"/>
    </ligandPart>
</feature>
<feature type="binding site" evidence="2">
    <location>
        <position position="201"/>
    </location>
    <ligand>
        <name>a ubiquinone</name>
        <dbReference type="ChEBI" id="CHEBI:16389"/>
    </ligand>
</feature>
<name>CYB_BELPA</name>
<keyword id="KW-0249">Electron transport</keyword>
<keyword id="KW-0349">Heme</keyword>
<keyword id="KW-0408">Iron</keyword>
<keyword id="KW-0472">Membrane</keyword>
<keyword id="KW-0479">Metal-binding</keyword>
<keyword id="KW-0496">Mitochondrion</keyword>
<keyword id="KW-0999">Mitochondrion inner membrane</keyword>
<keyword id="KW-0679">Respiratory chain</keyword>
<keyword id="KW-0812">Transmembrane</keyword>
<keyword id="KW-1133">Transmembrane helix</keyword>
<keyword id="KW-0813">Transport</keyword>
<keyword id="KW-0830">Ubiquinone</keyword>
<protein>
    <recommendedName>
        <fullName>Cytochrome b</fullName>
    </recommendedName>
    <alternativeName>
        <fullName>Complex III subunit 3</fullName>
    </alternativeName>
    <alternativeName>
        <fullName>Complex III subunit III</fullName>
    </alternativeName>
    <alternativeName>
        <fullName>Cytochrome b-c1 complex subunit 3</fullName>
    </alternativeName>
    <alternativeName>
        <fullName>Ubiquinol-cytochrome-c reductase complex cytochrome b subunit</fullName>
    </alternativeName>
</protein>
<accession>Q564P2</accession>